<organism>
    <name type="scientific">Aliivibrio fischeri (strain ATCC 700601 / ES114)</name>
    <name type="common">Vibrio fischeri</name>
    <dbReference type="NCBI Taxonomy" id="312309"/>
    <lineage>
        <taxon>Bacteria</taxon>
        <taxon>Pseudomonadati</taxon>
        <taxon>Pseudomonadota</taxon>
        <taxon>Gammaproteobacteria</taxon>
        <taxon>Vibrionales</taxon>
        <taxon>Vibrionaceae</taxon>
        <taxon>Aliivibrio</taxon>
    </lineage>
</organism>
<sequence>MATIKDVAKLAAVSTTTVSHVINKTRFVAEATQKRVWEAVEELNYAPSAVARSLKCNTTRTIGMLVTQSFNPFFAEVMHGVENYCYKQGYTLFMCNTEGDLEKQKHYLRMLAEKRVDGLLVMCSDLNEQLLTLLEKNTELPMVIMDWGPDSPRTDKIIDNSEEGGYLATKHLIENGHTHIACITGQADKVTCKERVRGFERAHIDANLTFNPEWILEGDFECASASRAVDKILAIEENKRPTALFCFNDIMALAAISKIQQSGLRVPEDISVIGYDNIELSAYFSPPLTTIHQPKRRVGKTAVEILLERIKDKDHERRVFEMQPEVVTRSSVSNRLK</sequence>
<gene>
    <name evidence="1" type="primary">purR</name>
    <name type="ordered locus">VF_1572</name>
</gene>
<comment type="function">
    <text evidence="1">Is the main repressor of the genes involved in the de novo synthesis of purine nucleotides, regulating purB, purC, purEK, purF, purHD, purL, purMN and guaBA expression. PurR is allosterically activated to bind its cognate DNA by binding the purine corepressors, hypoxanthine or guanine, thereby effecting transcription repression.</text>
</comment>
<comment type="pathway">
    <text>Purine metabolism; purine nucleotide biosynthesis [regulation].</text>
</comment>
<comment type="subunit">
    <text evidence="1">Homodimer.</text>
</comment>
<comment type="domain">
    <text evidence="1">Consists of two structural and functional domains: an N-terminal DNA-binding domain, approximately the first 60 residues, and a larger C-terminal domain, approximately 280 residues, which imparts the function of corepressor binding and oligomerization.</text>
</comment>
<name>PURR_ALIF1</name>
<accession>Q5E4H9</accession>
<reference key="1">
    <citation type="journal article" date="2005" name="Proc. Natl. Acad. Sci. U.S.A.">
        <title>Complete genome sequence of Vibrio fischeri: a symbiotic bacterium with pathogenic congeners.</title>
        <authorList>
            <person name="Ruby E.G."/>
            <person name="Urbanowski M."/>
            <person name="Campbell J."/>
            <person name="Dunn A."/>
            <person name="Faini M."/>
            <person name="Gunsalus R."/>
            <person name="Lostroh P."/>
            <person name="Lupp C."/>
            <person name="McCann J."/>
            <person name="Millikan D."/>
            <person name="Schaefer A."/>
            <person name="Stabb E."/>
            <person name="Stevens A."/>
            <person name="Visick K."/>
            <person name="Whistler C."/>
            <person name="Greenberg E.P."/>
        </authorList>
    </citation>
    <scope>NUCLEOTIDE SEQUENCE [LARGE SCALE GENOMIC DNA]</scope>
    <source>
        <strain>ATCC 700601 / ES114</strain>
    </source>
</reference>
<dbReference type="EMBL" id="CP000020">
    <property type="protein sequence ID" value="AAW86067.1"/>
    <property type="molecule type" value="Genomic_DNA"/>
</dbReference>
<dbReference type="RefSeq" id="WP_011262144.1">
    <property type="nucleotide sequence ID" value="NC_006840.2"/>
</dbReference>
<dbReference type="RefSeq" id="YP_204955.1">
    <property type="nucleotide sequence ID" value="NC_006840.2"/>
</dbReference>
<dbReference type="SMR" id="Q5E4H9"/>
<dbReference type="STRING" id="312309.VF_1572"/>
<dbReference type="EnsemblBacteria" id="AAW86067">
    <property type="protein sequence ID" value="AAW86067"/>
    <property type="gene ID" value="VF_1572"/>
</dbReference>
<dbReference type="GeneID" id="54164252"/>
<dbReference type="KEGG" id="vfi:VF_1572"/>
<dbReference type="PATRIC" id="fig|312309.11.peg.1591"/>
<dbReference type="eggNOG" id="COG1609">
    <property type="taxonomic scope" value="Bacteria"/>
</dbReference>
<dbReference type="HOGENOM" id="CLU_037628_6_2_6"/>
<dbReference type="OrthoDB" id="9798934at2"/>
<dbReference type="UniPathway" id="UPA00488"/>
<dbReference type="Proteomes" id="UP000000537">
    <property type="component" value="Chromosome I"/>
</dbReference>
<dbReference type="GO" id="GO:0003700">
    <property type="term" value="F:DNA-binding transcription factor activity"/>
    <property type="evidence" value="ECO:0007669"/>
    <property type="project" value="TreeGrafter"/>
</dbReference>
<dbReference type="GO" id="GO:0000976">
    <property type="term" value="F:transcription cis-regulatory region binding"/>
    <property type="evidence" value="ECO:0007669"/>
    <property type="project" value="TreeGrafter"/>
</dbReference>
<dbReference type="GO" id="GO:0045892">
    <property type="term" value="P:negative regulation of DNA-templated transcription"/>
    <property type="evidence" value="ECO:0007669"/>
    <property type="project" value="UniProtKB-UniRule"/>
</dbReference>
<dbReference type="GO" id="GO:0006164">
    <property type="term" value="P:purine nucleotide biosynthetic process"/>
    <property type="evidence" value="ECO:0007669"/>
    <property type="project" value="UniProtKB-UniPathway"/>
</dbReference>
<dbReference type="CDD" id="cd01392">
    <property type="entry name" value="HTH_LacI"/>
    <property type="match status" value="1"/>
</dbReference>
<dbReference type="CDD" id="cd06275">
    <property type="entry name" value="PBP1_PurR"/>
    <property type="match status" value="1"/>
</dbReference>
<dbReference type="FunFam" id="1.10.260.40:FF:000002">
    <property type="entry name" value="HTH-type transcriptional repressor PurR"/>
    <property type="match status" value="1"/>
</dbReference>
<dbReference type="Gene3D" id="3.40.50.2300">
    <property type="match status" value="2"/>
</dbReference>
<dbReference type="Gene3D" id="1.10.260.40">
    <property type="entry name" value="lambda repressor-like DNA-binding domains"/>
    <property type="match status" value="1"/>
</dbReference>
<dbReference type="HAMAP" id="MF_01277">
    <property type="entry name" value="HTH_type_PurR"/>
    <property type="match status" value="1"/>
</dbReference>
<dbReference type="InterPro" id="IPR000843">
    <property type="entry name" value="HTH_LacI"/>
</dbReference>
<dbReference type="InterPro" id="IPR046335">
    <property type="entry name" value="LacI/GalR-like_sensor"/>
</dbReference>
<dbReference type="InterPro" id="IPR010982">
    <property type="entry name" value="Lambda_DNA-bd_dom_sf"/>
</dbReference>
<dbReference type="InterPro" id="IPR028082">
    <property type="entry name" value="Peripla_BP_I"/>
</dbReference>
<dbReference type="InterPro" id="IPR023588">
    <property type="entry name" value="Tscrpt_reg_HTH_PurR"/>
</dbReference>
<dbReference type="PANTHER" id="PTHR30146:SF148">
    <property type="entry name" value="HTH-TYPE TRANSCRIPTIONAL REPRESSOR PURR-RELATED"/>
    <property type="match status" value="1"/>
</dbReference>
<dbReference type="PANTHER" id="PTHR30146">
    <property type="entry name" value="LACI-RELATED TRANSCRIPTIONAL REPRESSOR"/>
    <property type="match status" value="1"/>
</dbReference>
<dbReference type="Pfam" id="PF00356">
    <property type="entry name" value="LacI"/>
    <property type="match status" value="1"/>
</dbReference>
<dbReference type="Pfam" id="PF13377">
    <property type="entry name" value="Peripla_BP_3"/>
    <property type="match status" value="1"/>
</dbReference>
<dbReference type="PRINTS" id="PR00036">
    <property type="entry name" value="HTHLACI"/>
</dbReference>
<dbReference type="SMART" id="SM00354">
    <property type="entry name" value="HTH_LACI"/>
    <property type="match status" value="1"/>
</dbReference>
<dbReference type="SUPFAM" id="SSF47413">
    <property type="entry name" value="lambda repressor-like DNA-binding domains"/>
    <property type="match status" value="1"/>
</dbReference>
<dbReference type="SUPFAM" id="SSF53822">
    <property type="entry name" value="Periplasmic binding protein-like I"/>
    <property type="match status" value="1"/>
</dbReference>
<dbReference type="PROSITE" id="PS00356">
    <property type="entry name" value="HTH_LACI_1"/>
    <property type="match status" value="1"/>
</dbReference>
<dbReference type="PROSITE" id="PS50932">
    <property type="entry name" value="HTH_LACI_2"/>
    <property type="match status" value="1"/>
</dbReference>
<keyword id="KW-0238">DNA-binding</keyword>
<keyword id="KW-0658">Purine biosynthesis</keyword>
<keyword id="KW-1185">Reference proteome</keyword>
<keyword id="KW-0678">Repressor</keyword>
<keyword id="KW-0804">Transcription</keyword>
<keyword id="KW-0805">Transcription regulation</keyword>
<proteinExistence type="inferred from homology"/>
<evidence type="ECO:0000255" key="1">
    <source>
        <dbReference type="HAMAP-Rule" id="MF_01277"/>
    </source>
</evidence>
<feature type="chain" id="PRO_0000279673" description="HTH-type transcriptional repressor PurR">
    <location>
        <begin position="1"/>
        <end position="337"/>
    </location>
</feature>
<feature type="domain" description="HTH lacI-type" evidence="1">
    <location>
        <begin position="2"/>
        <end position="56"/>
    </location>
</feature>
<feature type="DNA-binding region" description="H-T-H motif" evidence="1">
    <location>
        <begin position="4"/>
        <end position="23"/>
    </location>
</feature>
<feature type="DNA-binding region" evidence="1">
    <location>
        <begin position="48"/>
        <end position="56"/>
    </location>
</feature>
<feature type="binding site" evidence="1">
    <location>
        <position position="73"/>
    </location>
    <ligand>
        <name>hypoxanthine</name>
        <dbReference type="ChEBI" id="CHEBI:17368"/>
    </ligand>
</feature>
<feature type="binding site" evidence="1">
    <location>
        <position position="189"/>
    </location>
    <ligand>
        <name>hypoxanthine</name>
        <dbReference type="ChEBI" id="CHEBI:17368"/>
    </ligand>
</feature>
<feature type="binding site" evidence="1">
    <location>
        <position position="191"/>
    </location>
    <ligand>
        <name>hypoxanthine</name>
        <dbReference type="ChEBI" id="CHEBI:17368"/>
    </ligand>
</feature>
<feature type="binding site" evidence="1">
    <location>
        <position position="220"/>
    </location>
    <ligand>
        <name>hypoxanthine</name>
        <dbReference type="ChEBI" id="CHEBI:17368"/>
    </ligand>
</feature>
<feature type="binding site" evidence="1">
    <location>
        <position position="276"/>
    </location>
    <ligand>
        <name>hypoxanthine</name>
        <dbReference type="ChEBI" id="CHEBI:17368"/>
    </ligand>
</feature>
<protein>
    <recommendedName>
        <fullName evidence="1">HTH-type transcriptional repressor PurR</fullName>
    </recommendedName>
    <alternativeName>
        <fullName evidence="1">Pur regulon repressor</fullName>
    </alternativeName>
    <alternativeName>
        <fullName evidence="1">Purine nucleotide synthesis repressor</fullName>
    </alternativeName>
</protein>